<proteinExistence type="inferred from homology"/>
<comment type="similarity">
    <text evidence="1">Belongs to the UPF0302 family.</text>
</comment>
<gene>
    <name type="ordered locus">Bcer98_1244</name>
</gene>
<organism>
    <name type="scientific">Bacillus cytotoxicus (strain DSM 22905 / CIP 110041 / 391-98 / NVH 391-98)</name>
    <dbReference type="NCBI Taxonomy" id="315749"/>
    <lineage>
        <taxon>Bacteria</taxon>
        <taxon>Bacillati</taxon>
        <taxon>Bacillota</taxon>
        <taxon>Bacilli</taxon>
        <taxon>Bacillales</taxon>
        <taxon>Bacillaceae</taxon>
        <taxon>Bacillus</taxon>
        <taxon>Bacillus cereus group</taxon>
    </lineage>
</organism>
<sequence>MNTPVSVNEKKDFVKWFLNNYQLKQRECVWILNYLMSHDQLMHKVHFVEHAKYCPRGLIMSANCVKETPFHFFKQNVMTTDAEKSFHDIRLNRDEDIYIQLNFKSSFQNPNYVAVLEENPYLPKHIEVNEKDRLLAERFLEESVFSFRRNRLLKQIDEALDNHDQEAFQRLTAELKTL</sequence>
<name>Y1244_BACCN</name>
<dbReference type="EMBL" id="CP000764">
    <property type="protein sequence ID" value="ABS21566.1"/>
    <property type="molecule type" value="Genomic_DNA"/>
</dbReference>
<dbReference type="RefSeq" id="WP_011984317.1">
    <property type="nucleotide sequence ID" value="NC_009674.1"/>
</dbReference>
<dbReference type="SMR" id="A7GN58"/>
<dbReference type="STRING" id="315749.Bcer98_1244"/>
<dbReference type="GeneID" id="33896593"/>
<dbReference type="KEGG" id="bcy:Bcer98_1244"/>
<dbReference type="eggNOG" id="COG5582">
    <property type="taxonomic scope" value="Bacteria"/>
</dbReference>
<dbReference type="HOGENOM" id="CLU_126019_0_0_9"/>
<dbReference type="OrthoDB" id="2155814at2"/>
<dbReference type="Proteomes" id="UP000002300">
    <property type="component" value="Chromosome"/>
</dbReference>
<dbReference type="Gene3D" id="3.40.1530.30">
    <property type="entry name" value="Uncharacterised family UPF0302, N-terminal domain"/>
    <property type="match status" value="1"/>
</dbReference>
<dbReference type="Gene3D" id="4.10.810.10">
    <property type="entry name" value="Virus Scaffolding Protein, Chain A"/>
    <property type="match status" value="1"/>
</dbReference>
<dbReference type="HAMAP" id="MF_00760">
    <property type="entry name" value="UPF0302"/>
    <property type="match status" value="1"/>
</dbReference>
<dbReference type="InterPro" id="IPR014957">
    <property type="entry name" value="IDEAL_dom"/>
</dbReference>
<dbReference type="InterPro" id="IPR011188">
    <property type="entry name" value="UPF0302"/>
</dbReference>
<dbReference type="InterPro" id="IPR014963">
    <property type="entry name" value="UPF0302_N"/>
</dbReference>
<dbReference type="InterPro" id="IPR038091">
    <property type="entry name" value="UPF0302_N_sf"/>
</dbReference>
<dbReference type="InterPro" id="IPR027393">
    <property type="entry name" value="Virus_scaffolding_prot_C"/>
</dbReference>
<dbReference type="NCBIfam" id="NF002965">
    <property type="entry name" value="PRK03636.1"/>
    <property type="match status" value="1"/>
</dbReference>
<dbReference type="Pfam" id="PF08858">
    <property type="entry name" value="IDEAL"/>
    <property type="match status" value="1"/>
</dbReference>
<dbReference type="Pfam" id="PF08864">
    <property type="entry name" value="UPF0302"/>
    <property type="match status" value="1"/>
</dbReference>
<dbReference type="PIRSF" id="PIRSF007165">
    <property type="entry name" value="UCP007165"/>
    <property type="match status" value="1"/>
</dbReference>
<dbReference type="SMART" id="SM00914">
    <property type="entry name" value="IDEAL"/>
    <property type="match status" value="1"/>
</dbReference>
<reference key="1">
    <citation type="journal article" date="2008" name="Chem. Biol. Interact.">
        <title>Extending the Bacillus cereus group genomics to putative food-borne pathogens of different toxicity.</title>
        <authorList>
            <person name="Lapidus A."/>
            <person name="Goltsman E."/>
            <person name="Auger S."/>
            <person name="Galleron N."/>
            <person name="Segurens B."/>
            <person name="Dossat C."/>
            <person name="Land M.L."/>
            <person name="Broussolle V."/>
            <person name="Brillard J."/>
            <person name="Guinebretiere M.-H."/>
            <person name="Sanchis V."/>
            <person name="Nguen-the C."/>
            <person name="Lereclus D."/>
            <person name="Richardson P."/>
            <person name="Wincker P."/>
            <person name="Weissenbach J."/>
            <person name="Ehrlich S.D."/>
            <person name="Sorokin A."/>
        </authorList>
    </citation>
    <scope>NUCLEOTIDE SEQUENCE [LARGE SCALE GENOMIC DNA]</scope>
    <source>
        <strain>DSM 22905 / CIP 110041 / 391-98 / NVH 391-98</strain>
    </source>
</reference>
<feature type="chain" id="PRO_1000083524" description="UPF0302 protein Bcer98_1244">
    <location>
        <begin position="1"/>
        <end position="178"/>
    </location>
</feature>
<evidence type="ECO:0000255" key="1">
    <source>
        <dbReference type="HAMAP-Rule" id="MF_00760"/>
    </source>
</evidence>
<accession>A7GN58</accession>
<protein>
    <recommendedName>
        <fullName evidence="1">UPF0302 protein Bcer98_1244</fullName>
    </recommendedName>
</protein>